<comment type="subunit">
    <text evidence="3">Component of the small ribosomal subunit (SSU) (Ref.2).</text>
</comment>
<comment type="miscellaneous">
    <text evidence="3">Initially thought to be part of the large ribosomal subunit. Crystal structures show eS32/eL41 to be a small ribosomal subunit forming a bridge at the interface of the 2 subunits.</text>
</comment>
<comment type="similarity">
    <text evidence="2">Belongs to the eukaryotic ribosomal protein eS32 family.</text>
</comment>
<sequence>MRAKWKKKRMRRLKRKRRKMRQRSK</sequence>
<name>RS32_TOBAC</name>
<evidence type="ECO:0000256" key="1">
    <source>
        <dbReference type="SAM" id="MobiDB-lite"/>
    </source>
</evidence>
<evidence type="ECO:0000305" key="2"/>
<evidence type="ECO:0000305" key="3">
    <source ref="2"/>
</evidence>
<accession>P62121</accession>
<accession>P35015</accession>
<dbReference type="EMBL" id="U26255">
    <property type="protein sequence ID" value="AAA67297.1"/>
    <property type="molecule type" value="mRNA"/>
</dbReference>
<dbReference type="PDB" id="8AZW">
    <property type="method" value="EM"/>
    <property type="resolution" value="2.14 A"/>
    <property type="chains" value="p=1-25"/>
</dbReference>
<dbReference type="PDB" id="8B2L">
    <property type="method" value="EM"/>
    <property type="resolution" value="2.20 A"/>
    <property type="chains" value="p3=1-25"/>
</dbReference>
<dbReference type="PDBsum" id="8AZW"/>
<dbReference type="PDBsum" id="8B2L"/>
<dbReference type="EMDB" id="EMD-15773"/>
<dbReference type="EMDB" id="EMD-15806"/>
<dbReference type="SMR" id="P62121"/>
<dbReference type="STRING" id="4097.P62121"/>
<dbReference type="PaxDb" id="4097-P62121"/>
<dbReference type="Proteomes" id="UP000084051">
    <property type="component" value="Unplaced"/>
</dbReference>
<dbReference type="GO" id="GO:1990904">
    <property type="term" value="C:ribonucleoprotein complex"/>
    <property type="evidence" value="ECO:0007669"/>
    <property type="project" value="UniProtKB-KW"/>
</dbReference>
<dbReference type="GO" id="GO:0005840">
    <property type="term" value="C:ribosome"/>
    <property type="evidence" value="ECO:0007669"/>
    <property type="project" value="UniProtKB-KW"/>
</dbReference>
<dbReference type="GO" id="GO:0003735">
    <property type="term" value="F:structural constituent of ribosome"/>
    <property type="evidence" value="ECO:0007669"/>
    <property type="project" value="InterPro"/>
</dbReference>
<dbReference type="GO" id="GO:0006412">
    <property type="term" value="P:translation"/>
    <property type="evidence" value="ECO:0007669"/>
    <property type="project" value="InterPro"/>
</dbReference>
<dbReference type="InterPro" id="IPR007836">
    <property type="entry name" value="Ribosomal_eS32"/>
</dbReference>
<dbReference type="Pfam" id="PF05162">
    <property type="entry name" value="Ribosomal_L41"/>
    <property type="match status" value="1"/>
</dbReference>
<organism>
    <name type="scientific">Nicotiana tabacum</name>
    <name type="common">Common tobacco</name>
    <dbReference type="NCBI Taxonomy" id="4097"/>
    <lineage>
        <taxon>Eukaryota</taxon>
        <taxon>Viridiplantae</taxon>
        <taxon>Streptophyta</taxon>
        <taxon>Embryophyta</taxon>
        <taxon>Tracheophyta</taxon>
        <taxon>Spermatophyta</taxon>
        <taxon>Magnoliopsida</taxon>
        <taxon>eudicotyledons</taxon>
        <taxon>Gunneridae</taxon>
        <taxon>Pentapetalae</taxon>
        <taxon>asterids</taxon>
        <taxon>lamiids</taxon>
        <taxon>Solanales</taxon>
        <taxon>Solanaceae</taxon>
        <taxon>Nicotianoideae</taxon>
        <taxon>Nicotianeae</taxon>
        <taxon>Nicotiana</taxon>
    </lineage>
</organism>
<feature type="chain" id="PRO_0000198070" description="Small ribosomal subunit protein eS32">
    <location>
        <begin position="1"/>
        <end position="25"/>
    </location>
</feature>
<feature type="region of interest" description="Disordered" evidence="1">
    <location>
        <begin position="1"/>
        <end position="25"/>
    </location>
</feature>
<reference key="1">
    <citation type="submission" date="1995-04" db="EMBL/GenBank/DDBJ databases">
        <authorList>
            <person name="Zhou X.-R."/>
        </authorList>
    </citation>
    <scope>NUCLEOTIDE SEQUENCE [MRNA]</scope>
    <source>
        <strain>cv. SR1</strain>
        <tissue>Leaf</tissue>
    </source>
</reference>
<reference key="2">
    <citation type="unpublished observations" date="2023-10">
        <authorList>
            <person name="Leibundgut M.A."/>
            <person name="Ban N."/>
        </authorList>
    </citation>
    <scope>REVISION OF SUBUNIT</scope>
    <scope>NOMENCLATURE</scope>
</reference>
<gene>
    <name type="primary">RPL41</name>
</gene>
<proteinExistence type="evidence at protein level"/>
<keyword id="KW-0002">3D-structure</keyword>
<keyword id="KW-1185">Reference proteome</keyword>
<keyword id="KW-0687">Ribonucleoprotein</keyword>
<keyword id="KW-0689">Ribosomal protein</keyword>
<protein>
    <recommendedName>
        <fullName evidence="3">Small ribosomal subunit protein eS32</fullName>
    </recommendedName>
    <alternativeName>
        <fullName>60S ribosomal protein L41</fullName>
    </alternativeName>
    <alternativeName>
        <fullName evidence="2">Large ribosomal subunit protein eL41</fullName>
    </alternativeName>
</protein>